<dbReference type="EMBL" id="AF473865">
    <property type="protein sequence ID" value="AAN16986.1"/>
    <property type="molecule type" value="Genomic_RNA"/>
</dbReference>
<dbReference type="SMR" id="Q8B0H8"/>
<dbReference type="Proteomes" id="UP000007625">
    <property type="component" value="Genome"/>
</dbReference>
<dbReference type="GO" id="GO:0030430">
    <property type="term" value="C:host cell cytoplasm"/>
    <property type="evidence" value="ECO:0007669"/>
    <property type="project" value="UniProtKB-SubCell"/>
</dbReference>
<dbReference type="GO" id="GO:0044423">
    <property type="term" value="C:virion component"/>
    <property type="evidence" value="ECO:0007669"/>
    <property type="project" value="UniProtKB-KW"/>
</dbReference>
<dbReference type="GO" id="GO:0003968">
    <property type="term" value="F:RNA-directed RNA polymerase activity"/>
    <property type="evidence" value="ECO:0007669"/>
    <property type="project" value="InterPro"/>
</dbReference>
<dbReference type="CDD" id="cd21033">
    <property type="entry name" value="VSV_P-protein-C_like"/>
    <property type="match status" value="1"/>
</dbReference>
<dbReference type="Gene3D" id="6.10.140.830">
    <property type="match status" value="1"/>
</dbReference>
<dbReference type="Gene3D" id="1.10.8.440">
    <property type="entry name" value="Vesicular stomatitis virus phosphoprotein C-terminal domain"/>
    <property type="match status" value="1"/>
</dbReference>
<dbReference type="InterPro" id="IPR048220">
    <property type="entry name" value="P-protein-C_vesiculovirus"/>
</dbReference>
<dbReference type="InterPro" id="IPR043036">
    <property type="entry name" value="Phosphoprotein_C_viral"/>
</dbReference>
<dbReference type="InterPro" id="IPR037263">
    <property type="entry name" value="Phosphoprotein_central"/>
</dbReference>
<dbReference type="Pfam" id="PF00922">
    <property type="entry name" value="Phosphoprotein"/>
    <property type="match status" value="1"/>
</dbReference>
<dbReference type="SUPFAM" id="SSF160892">
    <property type="entry name" value="Phosphoprotein oligomerization domain-like"/>
    <property type="match status" value="1"/>
</dbReference>
<reference key="1">
    <citation type="journal article" date="2002" name="J. Gen. Virol.">
        <title>Full-length genome analysis of natural isolates of vesicular stomatitis virus (Indiana 1 serotype) from North, Central and South America.</title>
        <authorList>
            <person name="Rodriguez L.L."/>
            <person name="Pauszek S.J."/>
            <person name="Bunch T.A."/>
            <person name="Schumann K.R."/>
        </authorList>
    </citation>
    <scope>NUCLEOTIDE SEQUENCE [GENOMIC RNA]</scope>
</reference>
<sequence>MDNLTKVREYLKSYSRLDQAVGEIDEIEAQRDEKSNYELFQEDGVEEHAKPSYFQAADDSDTESEPEVEDNQSLYVPDQEAEQVEGFIQGPLDDYADEEVDVVFTSDWKQPELESDEHGKTLRLTLPEGLSGEQKSQWLSTIKAVVQSAKYWNLAECTFEASGEGVIMKERQMTPDVYKVTPVMNTHPSQSEAVSDVWALSKTSMTFQPKKAGLQPLTISLDELFSSRGEFISVGGNGRMSHKEAILLGLRYKKLYNQARVKYSL</sequence>
<organism>
    <name type="scientific">Vesicular stomatitis Indiana virus (strain 85CLB South America)</name>
    <name type="common">VSIV</name>
    <dbReference type="NCBI Taxonomy" id="434490"/>
    <lineage>
        <taxon>Viruses</taxon>
        <taxon>Riboviria</taxon>
        <taxon>Orthornavirae</taxon>
        <taxon>Negarnaviricota</taxon>
        <taxon>Haploviricotina</taxon>
        <taxon>Monjiviricetes</taxon>
        <taxon>Mononegavirales</taxon>
        <taxon>Rhabdoviridae</taxon>
        <taxon>Alpharhabdovirinae</taxon>
        <taxon>Vesiculovirus</taxon>
        <taxon>Vesiculovirus indiana</taxon>
    </lineage>
</organism>
<feature type="chain" id="PRO_0000287352" description="Phosphoprotein">
    <location>
        <begin position="1"/>
        <end position="265"/>
    </location>
</feature>
<feature type="region of interest" description="Interaction with N(0)" evidence="2">
    <location>
        <begin position="1"/>
        <end position="60"/>
    </location>
</feature>
<feature type="region of interest" description="Disordered" evidence="5">
    <location>
        <begin position="42"/>
        <end position="74"/>
    </location>
</feature>
<feature type="region of interest" description="Interaction with the L polymerase" evidence="2">
    <location>
        <begin position="49"/>
        <end position="105"/>
    </location>
</feature>
<feature type="region of interest" description="Oligomerization" evidence="2">
    <location>
        <begin position="109"/>
        <end position="170"/>
    </location>
</feature>
<feature type="region of interest" description="Hinge" evidence="2">
    <location>
        <begin position="171"/>
        <end position="193"/>
    </location>
</feature>
<feature type="region of interest" description="Interaction with the Nucleoprotein-RNA and template-binding" evidence="3">
    <location>
        <begin position="245"/>
        <end position="265"/>
    </location>
</feature>
<feature type="compositionally biased region" description="Acidic residues" evidence="5">
    <location>
        <begin position="58"/>
        <end position="70"/>
    </location>
</feature>
<feature type="site" description="Involved in oligomerization" evidence="4">
    <location>
        <position position="138"/>
    </location>
</feature>
<feature type="site" description="Involved in oligomerization" evidence="4">
    <location>
        <position position="141"/>
    </location>
</feature>
<feature type="modified residue" description="Phosphotyrosine; by host" evidence="2">
    <location>
        <position position="14"/>
    </location>
</feature>
<feature type="modified residue" description="Phosphoserine; by host CK2" evidence="1">
    <location>
        <position position="60"/>
    </location>
</feature>
<feature type="modified residue" description="Phosphothreonine; by host CK2" evidence="1">
    <location>
        <position position="62"/>
    </location>
</feature>
<feature type="modified residue" description="Phosphoserine; by host CK2" evidence="1">
    <location>
        <position position="64"/>
    </location>
</feature>
<feature type="modified residue" description="Phosphoserine; by host" evidence="4">
    <location>
        <position position="226"/>
    </location>
</feature>
<feature type="modified residue" description="Phosphoserine; by host" evidence="4">
    <location>
        <position position="227"/>
    </location>
</feature>
<feature type="modified residue" description="Phosphoserine" evidence="4">
    <location>
        <position position="233"/>
    </location>
</feature>
<protein>
    <recommendedName>
        <fullName>Phosphoprotein</fullName>
        <shortName>Protein P</shortName>
    </recommendedName>
    <alternativeName>
        <fullName>NS</fullName>
    </alternativeName>
    <alternativeName>
        <fullName>Protein M1</fullName>
    </alternativeName>
</protein>
<comment type="function">
    <text evidence="2">Nonenzymatic cofactor regulating the function and conformation of the RNA polymerase and part of the transcription and replication complex. Binds the viral ribonucleocapsid and positions the L polymerase on the template. Acts as a chaperone for newly synthesized free N protein, so-called N(0). Plays a role in virion assembly.</text>
</comment>
<comment type="subunit">
    <text evidence="2 4">Homodimer (By similarity). Interacts with the L polymerase; the association of P and L forms the polymerase complex and positions P optimally for encapsidation of newly synthesized genomes with the nucleoprotein. Interacts (via N-terminus) with N(0). Interacts (via C-terminus) with N in ribonucleocapsid (via C-terminus); this interaction allows to package the L polymerase in the virion and positions the polymerase on the template, since P acts as a bridge between N and L (By similarity).</text>
</comment>
<comment type="subcellular location">
    <subcellularLocation>
        <location evidence="2">Virion</location>
    </subcellularLocation>
    <subcellularLocation>
        <location evidence="2">Host cytoplasm</location>
    </subcellularLocation>
</comment>
<comment type="domain">
    <text evidence="2">The N-terminus is disordered and is involved in binding N(0). The region of interaction with the L polymerase is necessary for transcription. The hinge region is highly variable. The central domain is involved in oligomerization. The C-terminus is basic and essential for binding the N-RNA template.</text>
</comment>
<comment type="PTM">
    <text evidence="2 3">Phosphorylated in the N-terminus by host CK2 (By similarity). Phosphorylation of the phosphoprotein is required for the transcriptional function of the P-L complex (By similarity).</text>
</comment>
<comment type="similarity">
    <text evidence="6">Belongs to the vesiculovirus protein P family.</text>
</comment>
<gene>
    <name type="primary">P</name>
</gene>
<keyword id="KW-0143">Chaperone</keyword>
<keyword id="KW-1035">Host cytoplasm</keyword>
<keyword id="KW-0597">Phosphoprotein</keyword>
<keyword id="KW-0693">Viral RNA replication</keyword>
<keyword id="KW-0946">Virion</keyword>
<proteinExistence type="inferred from homology"/>
<accession>Q8B0H8</accession>
<evidence type="ECO:0000250" key="1"/>
<evidence type="ECO:0000250" key="2">
    <source>
        <dbReference type="UniProtKB" id="P03520"/>
    </source>
</evidence>
<evidence type="ECO:0000250" key="3">
    <source>
        <dbReference type="UniProtKB" id="P04877"/>
    </source>
</evidence>
<evidence type="ECO:0000250" key="4">
    <source>
        <dbReference type="UniProtKB" id="P04880"/>
    </source>
</evidence>
<evidence type="ECO:0000256" key="5">
    <source>
        <dbReference type="SAM" id="MobiDB-lite"/>
    </source>
</evidence>
<evidence type="ECO:0000305" key="6"/>
<name>PHOSP_VSIVS</name>
<organismHost>
    <name type="scientific">Aedes</name>
    <dbReference type="NCBI Taxonomy" id="7158"/>
</organismHost>
<organismHost>
    <name type="scientific">Bos taurus</name>
    <name type="common">Bovine</name>
    <dbReference type="NCBI Taxonomy" id="9913"/>
</organismHost>
<organismHost>
    <name type="scientific">Culicoides</name>
    <dbReference type="NCBI Taxonomy" id="58271"/>
</organismHost>
<organismHost>
    <name type="scientific">Equus asinus</name>
    <name type="common">Donkey</name>
    <name type="synonym">Equus africanus asinus</name>
    <dbReference type="NCBI Taxonomy" id="9793"/>
</organismHost>
<organismHost>
    <name type="scientific">Equus caballus</name>
    <name type="common">Horse</name>
    <dbReference type="NCBI Taxonomy" id="9796"/>
</organismHost>
<organismHost>
    <name type="scientific">Homo sapiens</name>
    <name type="common">Human</name>
    <dbReference type="NCBI Taxonomy" id="9606"/>
</organismHost>
<organismHost>
    <name type="scientific">Lutzomyia</name>
    <dbReference type="NCBI Taxonomy" id="252607"/>
</organismHost>
<organismHost>
    <name type="scientific">Musca domestica</name>
    <name type="common">House fly</name>
    <dbReference type="NCBI Taxonomy" id="7370"/>
</organismHost>
<organismHost>
    <name type="scientific">Simuliidae</name>
    <name type="common">black flies</name>
    <dbReference type="NCBI Taxonomy" id="7190"/>
</organismHost>
<organismHost>
    <name type="scientific">Sus scrofa</name>
    <name type="common">Pig</name>
    <dbReference type="NCBI Taxonomy" id="9823"/>
</organismHost>